<evidence type="ECO:0000250" key="1">
    <source>
        <dbReference type="UniProtKB" id="B6ULW4"/>
    </source>
</evidence>
<evidence type="ECO:0000250" key="2">
    <source>
        <dbReference type="UniProtKB" id="P82270"/>
    </source>
</evidence>
<evidence type="ECO:0000255" key="3"/>
<evidence type="ECO:0000269" key="4">
    <source>
    </source>
</evidence>
<evidence type="ECO:0000305" key="5"/>
<comment type="function">
    <text evidence="4">PhTD-1 and PhTD-3 have antimicrobial activity. In low salt conditions PhTD-1 has antibacterial activity against the Gram-negative bacterium E.coli ML35p (MIC=1.5 uM), the Gram-positive bacteria L.monocytogenes EGD (MIC=1.6 uM) and methicillin-resistant S.aureus ATCC 33591 (MIC=2.5 uM), and the fungus C.albicans 820 (MIC=1.6 uM). At high physiological salt concentrations the antimicrobial activity of PhTD-1 decreases slightly: E.coli ML35p (MIC=2.0 uM), L.monocytogenes EGD (MIC=1.7 uM), S.aureus ATCC 33591 (MIC=3.6 uM), and C.albicans 820 (MIC=6.5 uM). In low salt conditions PhTD-3 has antibacterial activity against E.coli ML35p (MIC=1.7 uM), L.monocytogenes EGD (MIC=1.5 uM), S.aureus ATCC 33591 (MIC=1.7 uM), and C.albicans 820 (MIC=1.4 uM). At high physiological salt concentrations the antimicrobial activity of PhTD-3 decreases slightly: E.coli ML35p (MIC=2.2 uM), L.monocytogenes EGD (MIC=1.9 uM), S.aureus ATCC 33591 (MIC=4.5 uM), and C.albicans 820 (MIC=7.4 uM).</text>
</comment>
<comment type="subunit">
    <text evidence="4">PhTD-1 is a cyclic heterodimer composed of subunits A and B; disulfide-linked. PhTD-3 is a cyclic homodimer composed of two subunits A; disulfide-linked.</text>
</comment>
<comment type="PTM">
    <text evidence="2 4">Forms a cyclic peptide with subunit A (PhTD-3) or with subunit B (PhTD-1). An additional intersubunit disulfide bond is formed.</text>
</comment>
<comment type="mass spectrometry" mass="2051.9" method="MALDI" evidence="4">
    <text>PhTD-1, heterodimer, cyclized.</text>
</comment>
<comment type="mass spectrometry" mass="2044.9" method="MALDI" evidence="4">
    <text>PhTD-3, homodimer, cyclized.</text>
</comment>
<comment type="similarity">
    <text evidence="3">Belongs to the alpha-defensin family. Theta subfamily.</text>
</comment>
<feature type="peptide" id="PRO_0000399460" description="Theta defensin subunit A" evidence="4">
    <location>
        <begin position="1"/>
        <end position="9"/>
    </location>
</feature>
<feature type="disulfide bond" description="Interchain (with C-2 in subunit A); in form PhTD-3" evidence="2">
    <location>
        <position position="2"/>
    </location>
</feature>
<feature type="disulfide bond" description="Interchain (with C-2 in subunit B); in form PhTD-1" evidence="2">
    <location>
        <position position="2"/>
    </location>
</feature>
<feature type="disulfide bond" evidence="2">
    <location>
        <begin position="4"/>
        <end position="9"/>
    </location>
</feature>
<feature type="cross-link" description="Cyclopeptide (Arg-Cys) (interchain with C-9 in subunit A); in form PhTD-3">
    <location>
        <position position="1"/>
    </location>
</feature>
<feature type="cross-link" description="Cyclopeptide (Arg-Cys) (interchain with C-9 in subunit B); in form PhTD-1">
    <location>
        <position position="1"/>
    </location>
</feature>
<feature type="cross-link" description="Cyclopeptide (Cys-Arg) (interchain with R-1 in subunit A); in form PhTD-3">
    <location>
        <position position="9"/>
    </location>
</feature>
<feature type="cross-link" description="Cyclopeptide (Cys-Arg) (interchain with R-1 in subunit B); in form PhTD-1">
    <location>
        <position position="9"/>
    </location>
</feature>
<proteinExistence type="evidence at protein level"/>
<reference evidence="5" key="1">
    <citation type="journal article" date="2010" name="Rapid Commun. Mass Spectrom.">
        <title>De novo sequencing of two new cyclic theta-defensins from baboon (Papio hamadryas) leukocytes by matrix-assisted laser desorption/ionization mass spectrometry.</title>
        <authorList>
            <person name="Stegemann C."/>
            <person name="Tsvetkova E.V."/>
            <person name="Aleshina G.M."/>
            <person name="Lehrer R.I."/>
            <person name="Kokryakov V.N."/>
            <person name="Hoffmann R."/>
        </authorList>
    </citation>
    <scope>PROTEIN SEQUENCE</scope>
    <scope>FUNCTION</scope>
    <scope>SUBUNIT</scope>
    <scope>MASS SPECTROMETRY</scope>
    <source>
        <tissue evidence="4">Leukocyte</tissue>
    </source>
</reference>
<dbReference type="GO" id="GO:0042742">
    <property type="term" value="P:defense response to bacterium"/>
    <property type="evidence" value="ECO:0007669"/>
    <property type="project" value="UniProtKB-KW"/>
</dbReference>
<dbReference type="GO" id="GO:0050832">
    <property type="term" value="P:defense response to fungus"/>
    <property type="evidence" value="ECO:0007669"/>
    <property type="project" value="UniProtKB-KW"/>
</dbReference>
<dbReference type="GO" id="GO:0031640">
    <property type="term" value="P:killing of cells of another organism"/>
    <property type="evidence" value="ECO:0007669"/>
    <property type="project" value="UniProtKB-KW"/>
</dbReference>
<sequence length="9" mass="1044">RCVCTRGFC</sequence>
<organism>
    <name type="scientific">Papio hamadryas</name>
    <name type="common">Hamadryas baboon</name>
    <dbReference type="NCBI Taxonomy" id="9557"/>
    <lineage>
        <taxon>Eukaryota</taxon>
        <taxon>Metazoa</taxon>
        <taxon>Chordata</taxon>
        <taxon>Craniata</taxon>
        <taxon>Vertebrata</taxon>
        <taxon>Euteleostomi</taxon>
        <taxon>Mammalia</taxon>
        <taxon>Eutheria</taxon>
        <taxon>Euarchontoglires</taxon>
        <taxon>Primates</taxon>
        <taxon>Haplorrhini</taxon>
        <taxon>Catarrhini</taxon>
        <taxon>Cercopithecidae</taxon>
        <taxon>Cercopithecinae</taxon>
        <taxon>Papio</taxon>
    </lineage>
</organism>
<keyword id="KW-0044">Antibiotic</keyword>
<keyword id="KW-0929">Antimicrobial</keyword>
<keyword id="KW-0211">Defensin</keyword>
<keyword id="KW-0903">Direct protein sequencing</keyword>
<keyword id="KW-1015">Disulfide bond</keyword>
<keyword id="KW-0295">Fungicide</keyword>
<name>BTDA_PAPHA</name>
<protein>
    <recommendedName>
        <fullName evidence="1">Theta defensin subunit A</fullName>
    </recommendedName>
</protein>
<accession>P86722</accession>